<organism>
    <name type="scientific">Rickettsia felis (strain ATCC VR-1525 / URRWXCal2)</name>
    <name type="common">Rickettsia azadi</name>
    <dbReference type="NCBI Taxonomy" id="315456"/>
    <lineage>
        <taxon>Bacteria</taxon>
        <taxon>Pseudomonadati</taxon>
        <taxon>Pseudomonadota</taxon>
        <taxon>Alphaproteobacteria</taxon>
        <taxon>Rickettsiales</taxon>
        <taxon>Rickettsiaceae</taxon>
        <taxon>Rickettsieae</taxon>
        <taxon>Rickettsia</taxon>
        <taxon>spotted fever group</taxon>
    </lineage>
</organism>
<protein>
    <recommendedName>
        <fullName evidence="1">Ribonuclease PH</fullName>
        <shortName evidence="1">RNase PH</shortName>
        <ecNumber evidence="1">2.7.7.56</ecNumber>
    </recommendedName>
    <alternativeName>
        <fullName evidence="1">tRNA nucleotidyltransferase</fullName>
    </alternativeName>
</protein>
<name>RNPH_RICFE</name>
<evidence type="ECO:0000255" key="1">
    <source>
        <dbReference type="HAMAP-Rule" id="MF_00564"/>
    </source>
</evidence>
<accession>Q4UJN4</accession>
<sequence>MRQSGRKSNQLRPISLELSPLINAEGSCLIKIGNTHVMCSATCETTVPPFLRGQNQGWVTAEYGMLPGSTSQRIKREAAQGKQGGRTQEIQRLIGRNMRCVIDLKKLGERQIIIDCDVINADGGTRTAAITGSYVALHLAIRSLMKKRILKVNPLISQIAAVSCGIYKGEAILDLDYLEDSDAEVDSNFVFAGNGNLIEVQGTAEKEPFSEEQFIAMLKLAKGGAAELFKLQNQVLLGA</sequence>
<keyword id="KW-0548">Nucleotidyltransferase</keyword>
<keyword id="KW-0694">RNA-binding</keyword>
<keyword id="KW-0698">rRNA processing</keyword>
<keyword id="KW-0808">Transferase</keyword>
<keyword id="KW-0819">tRNA processing</keyword>
<keyword id="KW-0820">tRNA-binding</keyword>
<proteinExistence type="inferred from homology"/>
<feature type="chain" id="PRO_0000277945" description="Ribonuclease PH">
    <location>
        <begin position="1"/>
        <end position="239"/>
    </location>
</feature>
<feature type="binding site" evidence="1">
    <location>
        <position position="86"/>
    </location>
    <ligand>
        <name>phosphate</name>
        <dbReference type="ChEBI" id="CHEBI:43474"/>
        <note>substrate</note>
    </ligand>
</feature>
<feature type="binding site" evidence="1">
    <location>
        <begin position="124"/>
        <end position="126"/>
    </location>
    <ligand>
        <name>phosphate</name>
        <dbReference type="ChEBI" id="CHEBI:43474"/>
        <note>substrate</note>
    </ligand>
</feature>
<comment type="function">
    <text evidence="1">Phosphorolytic 3'-5' exoribonuclease that plays an important role in tRNA 3'-end maturation. Removes nucleotide residues following the 3'-CCA terminus of tRNAs; can also add nucleotides to the ends of RNA molecules by using nucleoside diphosphates as substrates, but this may not be physiologically important. Probably plays a role in initiation of 16S rRNA degradation (leading to ribosome degradation) during starvation.</text>
</comment>
<comment type="catalytic activity">
    <reaction evidence="1">
        <text>tRNA(n+1) + phosphate = tRNA(n) + a ribonucleoside 5'-diphosphate</text>
        <dbReference type="Rhea" id="RHEA:10628"/>
        <dbReference type="Rhea" id="RHEA-COMP:17343"/>
        <dbReference type="Rhea" id="RHEA-COMP:17344"/>
        <dbReference type="ChEBI" id="CHEBI:43474"/>
        <dbReference type="ChEBI" id="CHEBI:57930"/>
        <dbReference type="ChEBI" id="CHEBI:173114"/>
        <dbReference type="EC" id="2.7.7.56"/>
    </reaction>
</comment>
<comment type="subunit">
    <text evidence="1">Homohexameric ring arranged as a trimer of dimers.</text>
</comment>
<comment type="similarity">
    <text evidence="1">Belongs to the RNase PH family.</text>
</comment>
<gene>
    <name evidence="1" type="primary">rph</name>
    <name type="ordered locus">RF_0403</name>
</gene>
<dbReference type="EC" id="2.7.7.56" evidence="1"/>
<dbReference type="EMBL" id="CP000053">
    <property type="protein sequence ID" value="AAY61254.1"/>
    <property type="molecule type" value="Genomic_DNA"/>
</dbReference>
<dbReference type="SMR" id="Q4UJN4"/>
<dbReference type="STRING" id="315456.RF_0403"/>
<dbReference type="KEGG" id="rfe:RF_0403"/>
<dbReference type="eggNOG" id="COG0689">
    <property type="taxonomic scope" value="Bacteria"/>
</dbReference>
<dbReference type="HOGENOM" id="CLU_050858_0_0_5"/>
<dbReference type="OrthoDB" id="9802265at2"/>
<dbReference type="Proteomes" id="UP000008548">
    <property type="component" value="Chromosome"/>
</dbReference>
<dbReference type="GO" id="GO:0000175">
    <property type="term" value="F:3'-5'-RNA exonuclease activity"/>
    <property type="evidence" value="ECO:0007669"/>
    <property type="project" value="UniProtKB-UniRule"/>
</dbReference>
<dbReference type="GO" id="GO:0000049">
    <property type="term" value="F:tRNA binding"/>
    <property type="evidence" value="ECO:0007669"/>
    <property type="project" value="UniProtKB-UniRule"/>
</dbReference>
<dbReference type="GO" id="GO:0009022">
    <property type="term" value="F:tRNA nucleotidyltransferase activity"/>
    <property type="evidence" value="ECO:0007669"/>
    <property type="project" value="UniProtKB-UniRule"/>
</dbReference>
<dbReference type="GO" id="GO:0016075">
    <property type="term" value="P:rRNA catabolic process"/>
    <property type="evidence" value="ECO:0007669"/>
    <property type="project" value="UniProtKB-UniRule"/>
</dbReference>
<dbReference type="GO" id="GO:0006364">
    <property type="term" value="P:rRNA processing"/>
    <property type="evidence" value="ECO:0007669"/>
    <property type="project" value="UniProtKB-KW"/>
</dbReference>
<dbReference type="GO" id="GO:0008033">
    <property type="term" value="P:tRNA processing"/>
    <property type="evidence" value="ECO:0007669"/>
    <property type="project" value="UniProtKB-UniRule"/>
</dbReference>
<dbReference type="CDD" id="cd11362">
    <property type="entry name" value="RNase_PH_bact"/>
    <property type="match status" value="1"/>
</dbReference>
<dbReference type="FunFam" id="3.30.230.70:FF:000003">
    <property type="entry name" value="Ribonuclease PH"/>
    <property type="match status" value="1"/>
</dbReference>
<dbReference type="Gene3D" id="3.30.230.70">
    <property type="entry name" value="GHMP Kinase, N-terminal domain"/>
    <property type="match status" value="1"/>
</dbReference>
<dbReference type="HAMAP" id="MF_00564">
    <property type="entry name" value="RNase_PH"/>
    <property type="match status" value="1"/>
</dbReference>
<dbReference type="InterPro" id="IPR001247">
    <property type="entry name" value="ExoRNase_PH_dom1"/>
</dbReference>
<dbReference type="InterPro" id="IPR015847">
    <property type="entry name" value="ExoRNase_PH_dom2"/>
</dbReference>
<dbReference type="InterPro" id="IPR036345">
    <property type="entry name" value="ExoRNase_PH_dom2_sf"/>
</dbReference>
<dbReference type="InterPro" id="IPR027408">
    <property type="entry name" value="PNPase/RNase_PH_dom_sf"/>
</dbReference>
<dbReference type="InterPro" id="IPR020568">
    <property type="entry name" value="Ribosomal_Su5_D2-typ_SF"/>
</dbReference>
<dbReference type="InterPro" id="IPR050080">
    <property type="entry name" value="RNase_PH"/>
</dbReference>
<dbReference type="InterPro" id="IPR002381">
    <property type="entry name" value="RNase_PH_bac-type"/>
</dbReference>
<dbReference type="InterPro" id="IPR018336">
    <property type="entry name" value="RNase_PH_CS"/>
</dbReference>
<dbReference type="NCBIfam" id="TIGR01966">
    <property type="entry name" value="RNasePH"/>
    <property type="match status" value="1"/>
</dbReference>
<dbReference type="PANTHER" id="PTHR11953">
    <property type="entry name" value="EXOSOME COMPLEX COMPONENT"/>
    <property type="match status" value="1"/>
</dbReference>
<dbReference type="PANTHER" id="PTHR11953:SF0">
    <property type="entry name" value="EXOSOME COMPLEX COMPONENT RRP41"/>
    <property type="match status" value="1"/>
</dbReference>
<dbReference type="Pfam" id="PF01138">
    <property type="entry name" value="RNase_PH"/>
    <property type="match status" value="1"/>
</dbReference>
<dbReference type="Pfam" id="PF03725">
    <property type="entry name" value="RNase_PH_C"/>
    <property type="match status" value="1"/>
</dbReference>
<dbReference type="SUPFAM" id="SSF55666">
    <property type="entry name" value="Ribonuclease PH domain 2-like"/>
    <property type="match status" value="1"/>
</dbReference>
<dbReference type="SUPFAM" id="SSF54211">
    <property type="entry name" value="Ribosomal protein S5 domain 2-like"/>
    <property type="match status" value="1"/>
</dbReference>
<dbReference type="PROSITE" id="PS01277">
    <property type="entry name" value="RIBONUCLEASE_PH"/>
    <property type="match status" value="1"/>
</dbReference>
<reference key="1">
    <citation type="journal article" date="2005" name="PLoS Biol.">
        <title>The genome sequence of Rickettsia felis identifies the first putative conjugative plasmid in an obligate intracellular parasite.</title>
        <authorList>
            <person name="Ogata H."/>
            <person name="Renesto P."/>
            <person name="Audic S."/>
            <person name="Robert C."/>
            <person name="Blanc G."/>
            <person name="Fournier P.-E."/>
            <person name="Parinello H."/>
            <person name="Claverie J.-M."/>
            <person name="Raoult D."/>
        </authorList>
    </citation>
    <scope>NUCLEOTIDE SEQUENCE [LARGE SCALE GENOMIC DNA]</scope>
    <source>
        <strain>ATCC VR-1525 / URRWXCal2</strain>
    </source>
</reference>